<accession>B6YRM5</accession>
<name>MIAA2_AZOPC</name>
<evidence type="ECO:0000255" key="1">
    <source>
        <dbReference type="HAMAP-Rule" id="MF_00185"/>
    </source>
</evidence>
<keyword id="KW-0067">ATP-binding</keyword>
<keyword id="KW-0460">Magnesium</keyword>
<keyword id="KW-0547">Nucleotide-binding</keyword>
<keyword id="KW-1185">Reference proteome</keyword>
<keyword id="KW-0808">Transferase</keyword>
<keyword id="KW-0819">tRNA processing</keyword>
<feature type="chain" id="PRO_0000377073" description="tRNA dimethylallyltransferase 2">
    <location>
        <begin position="1"/>
        <end position="307"/>
    </location>
</feature>
<feature type="region of interest" description="Interaction with substrate tRNA" evidence="1">
    <location>
        <begin position="34"/>
        <end position="37"/>
    </location>
</feature>
<feature type="binding site" evidence="1">
    <location>
        <begin position="9"/>
        <end position="16"/>
    </location>
    <ligand>
        <name>ATP</name>
        <dbReference type="ChEBI" id="CHEBI:30616"/>
    </ligand>
</feature>
<feature type="binding site" evidence="1">
    <location>
        <begin position="11"/>
        <end position="16"/>
    </location>
    <ligand>
        <name>substrate</name>
    </ligand>
</feature>
<feature type="site" description="Interaction with substrate tRNA" evidence="1">
    <location>
        <position position="100"/>
    </location>
</feature>
<feature type="site" description="Interaction with substrate tRNA" evidence="1">
    <location>
        <position position="122"/>
    </location>
</feature>
<sequence>MRSLIVVLGPTAVGKTKVAIFLAKYFQSPIISVDSRQLYKELPIGTAAPSIVELNQVKHYFVASLSVTDYYNASKFEKEAIALISNLHQKYQTIIACGGSMLYLDALCRGIDEIPTIDPKLRMNILSVYRKEGIDSILRQLRTHDPTFYNLVDLKNHKRVIHALEICLMTGKPYSQLRCGNVKKRSFNIIKIGLNRERQELYNRISIRVDKMIENGLLEEARRVYPYHHFNSLNTVGYKELFQFFDGKYTLDFAIEKIKRNTRIYSRKQIAWFKKDKEINWFYPNNIDEFETSCLLDTISHKSILLT</sequence>
<gene>
    <name evidence="1" type="primary">miaA2</name>
    <name type="ordered locus">CFPG_584</name>
</gene>
<protein>
    <recommendedName>
        <fullName evidence="1">tRNA dimethylallyltransferase 2</fullName>
        <ecNumber evidence="1">2.5.1.75</ecNumber>
    </recommendedName>
    <alternativeName>
        <fullName evidence="1">Dimethylallyl diphosphate:tRNA dimethylallyltransferase 2</fullName>
        <shortName evidence="1">DMAPP:tRNA dimethylallyltransferase 2</shortName>
        <shortName evidence="1">DMATase 2</shortName>
    </alternativeName>
    <alternativeName>
        <fullName evidence="1">Isopentenyl-diphosphate:tRNA isopentenyltransferase 2</fullName>
        <shortName evidence="1">IPP transferase 2</shortName>
        <shortName evidence="1">IPPT 2</shortName>
        <shortName evidence="1">IPTase 2</shortName>
    </alternativeName>
</protein>
<dbReference type="EC" id="2.5.1.75" evidence="1"/>
<dbReference type="EMBL" id="AP010656">
    <property type="protein sequence ID" value="BAG83847.1"/>
    <property type="molecule type" value="Genomic_DNA"/>
</dbReference>
<dbReference type="RefSeq" id="WP_012573607.1">
    <property type="nucleotide sequence ID" value="NC_011565.1"/>
</dbReference>
<dbReference type="SMR" id="B6YRM5"/>
<dbReference type="STRING" id="511995.CFPG_584"/>
<dbReference type="KEGG" id="aps:CFPG_584"/>
<dbReference type="eggNOG" id="COG0324">
    <property type="taxonomic scope" value="Bacteria"/>
</dbReference>
<dbReference type="HOGENOM" id="CLU_032616_0_1_10"/>
<dbReference type="OrthoDB" id="9776390at2"/>
<dbReference type="Proteomes" id="UP000000723">
    <property type="component" value="Chromosome"/>
</dbReference>
<dbReference type="GO" id="GO:0005524">
    <property type="term" value="F:ATP binding"/>
    <property type="evidence" value="ECO:0007669"/>
    <property type="project" value="UniProtKB-UniRule"/>
</dbReference>
<dbReference type="GO" id="GO:0052381">
    <property type="term" value="F:tRNA dimethylallyltransferase activity"/>
    <property type="evidence" value="ECO:0007669"/>
    <property type="project" value="UniProtKB-UniRule"/>
</dbReference>
<dbReference type="GO" id="GO:0006400">
    <property type="term" value="P:tRNA modification"/>
    <property type="evidence" value="ECO:0007669"/>
    <property type="project" value="TreeGrafter"/>
</dbReference>
<dbReference type="Gene3D" id="1.10.20.140">
    <property type="match status" value="1"/>
</dbReference>
<dbReference type="Gene3D" id="3.40.50.300">
    <property type="entry name" value="P-loop containing nucleotide triphosphate hydrolases"/>
    <property type="match status" value="1"/>
</dbReference>
<dbReference type="HAMAP" id="MF_00185">
    <property type="entry name" value="IPP_trans"/>
    <property type="match status" value="1"/>
</dbReference>
<dbReference type="InterPro" id="IPR039657">
    <property type="entry name" value="Dimethylallyltransferase"/>
</dbReference>
<dbReference type="InterPro" id="IPR018022">
    <property type="entry name" value="IPT"/>
</dbReference>
<dbReference type="InterPro" id="IPR027417">
    <property type="entry name" value="P-loop_NTPase"/>
</dbReference>
<dbReference type="NCBIfam" id="TIGR00174">
    <property type="entry name" value="miaA"/>
    <property type="match status" value="1"/>
</dbReference>
<dbReference type="PANTHER" id="PTHR11088">
    <property type="entry name" value="TRNA DIMETHYLALLYLTRANSFERASE"/>
    <property type="match status" value="1"/>
</dbReference>
<dbReference type="PANTHER" id="PTHR11088:SF60">
    <property type="entry name" value="TRNA DIMETHYLALLYLTRANSFERASE"/>
    <property type="match status" value="1"/>
</dbReference>
<dbReference type="Pfam" id="PF01715">
    <property type="entry name" value="IPPT"/>
    <property type="match status" value="1"/>
</dbReference>
<dbReference type="SUPFAM" id="SSF52540">
    <property type="entry name" value="P-loop containing nucleoside triphosphate hydrolases"/>
    <property type="match status" value="2"/>
</dbReference>
<proteinExistence type="inferred from homology"/>
<comment type="function">
    <text evidence="1">Catalyzes the transfer of a dimethylallyl group onto the adenine at position 37 in tRNAs that read codons beginning with uridine, leading to the formation of N6-(dimethylallyl)adenosine (i(6)A).</text>
</comment>
<comment type="catalytic activity">
    <reaction evidence="1">
        <text>adenosine(37) in tRNA + dimethylallyl diphosphate = N(6)-dimethylallyladenosine(37) in tRNA + diphosphate</text>
        <dbReference type="Rhea" id="RHEA:26482"/>
        <dbReference type="Rhea" id="RHEA-COMP:10162"/>
        <dbReference type="Rhea" id="RHEA-COMP:10375"/>
        <dbReference type="ChEBI" id="CHEBI:33019"/>
        <dbReference type="ChEBI" id="CHEBI:57623"/>
        <dbReference type="ChEBI" id="CHEBI:74411"/>
        <dbReference type="ChEBI" id="CHEBI:74415"/>
        <dbReference type="EC" id="2.5.1.75"/>
    </reaction>
</comment>
<comment type="cofactor">
    <cofactor evidence="1">
        <name>Mg(2+)</name>
        <dbReference type="ChEBI" id="CHEBI:18420"/>
    </cofactor>
</comment>
<comment type="subunit">
    <text evidence="1">Monomer.</text>
</comment>
<comment type="similarity">
    <text evidence="1">Belongs to the IPP transferase family.</text>
</comment>
<reference key="1">
    <citation type="journal article" date="2008" name="Science">
        <title>Genome of an endosymbiont coupling N2 fixation to cellulolysis within RT protist cells in termite gut.</title>
        <authorList>
            <person name="Hongoh Y."/>
            <person name="Sharma V.K."/>
            <person name="Prakash T."/>
            <person name="Noda S."/>
            <person name="Toh H."/>
            <person name="Taylor T.D."/>
            <person name="Kudo T."/>
            <person name="Sakaki Y."/>
            <person name="Toyoda A."/>
            <person name="Hattori M."/>
            <person name="Ohkuma M."/>
        </authorList>
    </citation>
    <scope>NUCLEOTIDE SEQUENCE [LARGE SCALE GENOMIC DNA]</scope>
</reference>
<organism>
    <name type="scientific">Azobacteroides pseudotrichonymphae genomovar. CFP2</name>
    <dbReference type="NCBI Taxonomy" id="511995"/>
    <lineage>
        <taxon>Bacteria</taxon>
        <taxon>Pseudomonadati</taxon>
        <taxon>Bacteroidota</taxon>
        <taxon>Bacteroidia</taxon>
        <taxon>Bacteroidales</taxon>
        <taxon>Candidatus Azobacteroides</taxon>
    </lineage>
</organism>